<proteinExistence type="predicted"/>
<sequence>MLTMENRGIRIAERYGYKLVPHFFNLFFILDNWNNIPIGKTIVSLYNYRQKEFVEIFKKYDENIGIATVNYTNVHVIKNHNEFEIIVYNVDSIHDHKSKYLLMLFLGNKFIFRRGKVYLYDIVIRNLIKSHDLQFKIKKINLIRVRSLFGNNIVSYYPKKELIRNSIILGKGANDSIYVITEINNKRVLYYVKRIRKIPRLNRIALKNHKLQYQFFKMLLQKGILQKETLFPIVPLRSLFTSLRISGTSEWKFSPLYVFNGRLVNANIYARAMNPVLIDYDYDETNQVLLKFADESYHSVLCGLDYKNMLWCITLPAITMWWRIKEVYKYVYDLDNQTKVFNY</sequence>
<organismHost>
    <name type="scientific">Saccharolobus islandicus</name>
    <name type="common">Sulfolobus islandicus</name>
    <dbReference type="NCBI Taxonomy" id="43080"/>
</organismHost>
<accession>Q914K6</accession>
<protein>
    <recommendedName>
        <fullName>Uncharacterized protein 24</fullName>
    </recommendedName>
</protein>
<feature type="chain" id="PRO_0000385425" description="Uncharacterized protein 24">
    <location>
        <begin position="1"/>
        <end position="343"/>
    </location>
</feature>
<dbReference type="EMBL" id="AF440571">
    <property type="protein sequence ID" value="AAL27735.1"/>
    <property type="molecule type" value="Genomic_DNA"/>
</dbReference>
<dbReference type="RefSeq" id="NP_445689.1">
    <property type="nucleotide sequence ID" value="NC_003214.2"/>
</dbReference>
<dbReference type="GeneID" id="922305"/>
<dbReference type="KEGG" id="vg:922305"/>
<dbReference type="Proteomes" id="UP000007017">
    <property type="component" value="Segment"/>
</dbReference>
<organism>
    <name type="scientific">Sulfolobus islandicus filamentous virus (isolate Iceland/Hveragerdi)</name>
    <name type="common">SIFV</name>
    <dbReference type="NCBI Taxonomy" id="654908"/>
    <lineage>
        <taxon>Viruses</taxon>
        <taxon>Adnaviria</taxon>
        <taxon>Zilligvirae</taxon>
        <taxon>Taleaviricota</taxon>
        <taxon>Tokiviricetes</taxon>
        <taxon>Ligamenvirales</taxon>
        <taxon>Lipothrixviridae</taxon>
        <taxon>Betalipothrixvirus</taxon>
        <taxon>Sulfolobus islandicus filamentous virus</taxon>
    </lineage>
</organism>
<keyword id="KW-1185">Reference proteome</keyword>
<name>Y024_SIFVH</name>
<reference key="1">
    <citation type="journal article" date="2000" name="Virology">
        <title>A novel lipothrixvirus, SIFV, of the extremely thermophilic crenarchaeon Sulfolobus.</title>
        <authorList>
            <person name="Arnold H.P."/>
            <person name="Zillig W."/>
            <person name="Ziese U."/>
            <person name="Holz I."/>
            <person name="Crosby M."/>
            <person name="Utterback T."/>
            <person name="Weidmann J.F."/>
            <person name="Umayam L.A."/>
            <person name="Teffera K."/>
            <person name="Kristjanson J.K."/>
            <person name="Klenk H.P."/>
            <person name="Nelson K.E."/>
            <person name="Fraser C.M."/>
        </authorList>
    </citation>
    <scope>NUCLEOTIDE SEQUENCE [GENOMIC DNA]</scope>
</reference>
<gene>
    <name type="primary">SIFV0024</name>
</gene>